<accession>Q9JJ93</accession>
<accession>Q921Q2</accession>
<protein>
    <recommendedName>
        <fullName>Uncharacterized protein C14orf119 homolog</fullName>
    </recommendedName>
</protein>
<keyword id="KW-0496">Mitochondrion</keyword>
<keyword id="KW-1185">Reference proteome</keyword>
<evidence type="ECO:0000250" key="1"/>
<evidence type="ECO:0000305" key="2"/>
<reference key="1">
    <citation type="submission" date="2000-04" db="EMBL/GenBank/DDBJ databases">
        <title>Isolation of full-length cDNA clones from mouse brain cDNA library made by oligo-capping method.</title>
        <authorList>
            <person name="Osada N."/>
            <person name="Kusuda J."/>
            <person name="Tanuma R."/>
            <person name="Ito A."/>
            <person name="Hirata M."/>
            <person name="Sugano S."/>
            <person name="Hashimoto K."/>
        </authorList>
    </citation>
    <scope>NUCLEOTIDE SEQUENCE [LARGE SCALE MRNA]</scope>
    <source>
        <strain>C57BL/6J</strain>
        <tissue>Brain</tissue>
    </source>
</reference>
<reference key="2">
    <citation type="journal article" date="2005" name="Science">
        <title>The transcriptional landscape of the mammalian genome.</title>
        <authorList>
            <person name="Carninci P."/>
            <person name="Kasukawa T."/>
            <person name="Katayama S."/>
            <person name="Gough J."/>
            <person name="Frith M.C."/>
            <person name="Maeda N."/>
            <person name="Oyama R."/>
            <person name="Ravasi T."/>
            <person name="Lenhard B."/>
            <person name="Wells C."/>
            <person name="Kodzius R."/>
            <person name="Shimokawa K."/>
            <person name="Bajic V.B."/>
            <person name="Brenner S.E."/>
            <person name="Batalov S."/>
            <person name="Forrest A.R."/>
            <person name="Zavolan M."/>
            <person name="Davis M.J."/>
            <person name="Wilming L.G."/>
            <person name="Aidinis V."/>
            <person name="Allen J.E."/>
            <person name="Ambesi-Impiombato A."/>
            <person name="Apweiler R."/>
            <person name="Aturaliya R.N."/>
            <person name="Bailey T.L."/>
            <person name="Bansal M."/>
            <person name="Baxter L."/>
            <person name="Beisel K.W."/>
            <person name="Bersano T."/>
            <person name="Bono H."/>
            <person name="Chalk A.M."/>
            <person name="Chiu K.P."/>
            <person name="Choudhary V."/>
            <person name="Christoffels A."/>
            <person name="Clutterbuck D.R."/>
            <person name="Crowe M.L."/>
            <person name="Dalla E."/>
            <person name="Dalrymple B.P."/>
            <person name="de Bono B."/>
            <person name="Della Gatta G."/>
            <person name="di Bernardo D."/>
            <person name="Down T."/>
            <person name="Engstrom P."/>
            <person name="Fagiolini M."/>
            <person name="Faulkner G."/>
            <person name="Fletcher C.F."/>
            <person name="Fukushima T."/>
            <person name="Furuno M."/>
            <person name="Futaki S."/>
            <person name="Gariboldi M."/>
            <person name="Georgii-Hemming P."/>
            <person name="Gingeras T.R."/>
            <person name="Gojobori T."/>
            <person name="Green R.E."/>
            <person name="Gustincich S."/>
            <person name="Harbers M."/>
            <person name="Hayashi Y."/>
            <person name="Hensch T.K."/>
            <person name="Hirokawa N."/>
            <person name="Hill D."/>
            <person name="Huminiecki L."/>
            <person name="Iacono M."/>
            <person name="Ikeo K."/>
            <person name="Iwama A."/>
            <person name="Ishikawa T."/>
            <person name="Jakt M."/>
            <person name="Kanapin A."/>
            <person name="Katoh M."/>
            <person name="Kawasawa Y."/>
            <person name="Kelso J."/>
            <person name="Kitamura H."/>
            <person name="Kitano H."/>
            <person name="Kollias G."/>
            <person name="Krishnan S.P."/>
            <person name="Kruger A."/>
            <person name="Kummerfeld S.K."/>
            <person name="Kurochkin I.V."/>
            <person name="Lareau L.F."/>
            <person name="Lazarevic D."/>
            <person name="Lipovich L."/>
            <person name="Liu J."/>
            <person name="Liuni S."/>
            <person name="McWilliam S."/>
            <person name="Madan Babu M."/>
            <person name="Madera M."/>
            <person name="Marchionni L."/>
            <person name="Matsuda H."/>
            <person name="Matsuzawa S."/>
            <person name="Miki H."/>
            <person name="Mignone F."/>
            <person name="Miyake S."/>
            <person name="Morris K."/>
            <person name="Mottagui-Tabar S."/>
            <person name="Mulder N."/>
            <person name="Nakano N."/>
            <person name="Nakauchi H."/>
            <person name="Ng P."/>
            <person name="Nilsson R."/>
            <person name="Nishiguchi S."/>
            <person name="Nishikawa S."/>
            <person name="Nori F."/>
            <person name="Ohara O."/>
            <person name="Okazaki Y."/>
            <person name="Orlando V."/>
            <person name="Pang K.C."/>
            <person name="Pavan W.J."/>
            <person name="Pavesi G."/>
            <person name="Pesole G."/>
            <person name="Petrovsky N."/>
            <person name="Piazza S."/>
            <person name="Reed J."/>
            <person name="Reid J.F."/>
            <person name="Ring B.Z."/>
            <person name="Ringwald M."/>
            <person name="Rost B."/>
            <person name="Ruan Y."/>
            <person name="Salzberg S.L."/>
            <person name="Sandelin A."/>
            <person name="Schneider C."/>
            <person name="Schoenbach C."/>
            <person name="Sekiguchi K."/>
            <person name="Semple C.A."/>
            <person name="Seno S."/>
            <person name="Sessa L."/>
            <person name="Sheng Y."/>
            <person name="Shibata Y."/>
            <person name="Shimada H."/>
            <person name="Shimada K."/>
            <person name="Silva D."/>
            <person name="Sinclair B."/>
            <person name="Sperling S."/>
            <person name="Stupka E."/>
            <person name="Sugiura K."/>
            <person name="Sultana R."/>
            <person name="Takenaka Y."/>
            <person name="Taki K."/>
            <person name="Tammoja K."/>
            <person name="Tan S.L."/>
            <person name="Tang S."/>
            <person name="Taylor M.S."/>
            <person name="Tegner J."/>
            <person name="Teichmann S.A."/>
            <person name="Ueda H.R."/>
            <person name="van Nimwegen E."/>
            <person name="Verardo R."/>
            <person name="Wei C.L."/>
            <person name="Yagi K."/>
            <person name="Yamanishi H."/>
            <person name="Zabarovsky E."/>
            <person name="Zhu S."/>
            <person name="Zimmer A."/>
            <person name="Hide W."/>
            <person name="Bult C."/>
            <person name="Grimmond S.M."/>
            <person name="Teasdale R.D."/>
            <person name="Liu E.T."/>
            <person name="Brusic V."/>
            <person name="Quackenbush J."/>
            <person name="Wahlestedt C."/>
            <person name="Mattick J.S."/>
            <person name="Hume D.A."/>
            <person name="Kai C."/>
            <person name="Sasaki D."/>
            <person name="Tomaru Y."/>
            <person name="Fukuda S."/>
            <person name="Kanamori-Katayama M."/>
            <person name="Suzuki M."/>
            <person name="Aoki J."/>
            <person name="Arakawa T."/>
            <person name="Iida J."/>
            <person name="Imamura K."/>
            <person name="Itoh M."/>
            <person name="Kato T."/>
            <person name="Kawaji H."/>
            <person name="Kawagashira N."/>
            <person name="Kawashima T."/>
            <person name="Kojima M."/>
            <person name="Kondo S."/>
            <person name="Konno H."/>
            <person name="Nakano K."/>
            <person name="Ninomiya N."/>
            <person name="Nishio T."/>
            <person name="Okada M."/>
            <person name="Plessy C."/>
            <person name="Shibata K."/>
            <person name="Shiraki T."/>
            <person name="Suzuki S."/>
            <person name="Tagami M."/>
            <person name="Waki K."/>
            <person name="Watahiki A."/>
            <person name="Okamura-Oho Y."/>
            <person name="Suzuki H."/>
            <person name="Kawai J."/>
            <person name="Hayashizaki Y."/>
        </authorList>
    </citation>
    <scope>NUCLEOTIDE SEQUENCE [LARGE SCALE MRNA]</scope>
    <source>
        <strain>C57BL/6J</strain>
        <tissue>Testis</tissue>
    </source>
</reference>
<reference key="3">
    <citation type="journal article" date="2004" name="Genome Res.">
        <title>The status, quality, and expansion of the NIH full-length cDNA project: the Mammalian Gene Collection (MGC).</title>
        <authorList>
            <consortium name="The MGC Project Team"/>
        </authorList>
    </citation>
    <scope>NUCLEOTIDE SEQUENCE [LARGE SCALE MRNA]</scope>
    <source>
        <tissue>Mammary tumor</tissue>
    </source>
</reference>
<gene>
    <name type="ORF">MNCb-2990</name>
</gene>
<proteinExistence type="evidence at transcript level"/>
<feature type="chain" id="PRO_0000089930" description="Uncharacterized protein C14orf119 homolog">
    <location>
        <begin position="1"/>
        <end position="142"/>
    </location>
</feature>
<feature type="sequence conflict" description="In Ref. 3; AAH11283." evidence="2" ref="3">
    <original>Y</original>
    <variation>H</variation>
    <location>
        <position position="46"/>
    </location>
</feature>
<feature type="sequence conflict" description="In Ref. 3; AAH11283." evidence="2" ref="3">
    <original>S</original>
    <variation>N</variation>
    <location>
        <position position="123"/>
    </location>
</feature>
<sequence>MSLESSSTSVPPCFPSVLPSVPDDIASSSPPPMSYITSQEMKCILYWFASWSGPQRERFLQDLVAKAVPGKLQPLLDALEQLSMSAANRPPCIFECQLRLWDQWFRGWAEQERNEFVRQLEVSEPDFVAKFYQAVAATAGKD</sequence>
<dbReference type="EMBL" id="AB041657">
    <property type="protein sequence ID" value="BAA95104.1"/>
    <property type="molecule type" value="mRNA"/>
</dbReference>
<dbReference type="EMBL" id="AK007261">
    <property type="protein sequence ID" value="BAB24921.1"/>
    <property type="molecule type" value="mRNA"/>
</dbReference>
<dbReference type="EMBL" id="BC011283">
    <property type="protein sequence ID" value="AAH11283.1"/>
    <property type="molecule type" value="mRNA"/>
</dbReference>
<dbReference type="CCDS" id="CCDS27099.1"/>
<dbReference type="RefSeq" id="NP_067412.1">
    <property type="nucleotide sequence ID" value="NM_021437.2"/>
</dbReference>
<dbReference type="SMR" id="Q9JJ93"/>
<dbReference type="FunCoup" id="Q9JJ93">
    <property type="interactions" value="2670"/>
</dbReference>
<dbReference type="STRING" id="10090.ENSMUSP00000047702"/>
<dbReference type="PhosphoSitePlus" id="Q9JJ93"/>
<dbReference type="PaxDb" id="10090-ENSMUSP00000047702"/>
<dbReference type="ProteomicsDB" id="285505"/>
<dbReference type="Pumba" id="Q9JJ93"/>
<dbReference type="Antibodypedia" id="177">
    <property type="antibodies" value="22 antibodies from 11 providers"/>
</dbReference>
<dbReference type="Ensembl" id="ENSMUST00000038539.8">
    <property type="protein sequence ID" value="ENSMUSP00000047702.7"/>
    <property type="gene ID" value="ENSMUSG00000040822.8"/>
</dbReference>
<dbReference type="Ensembl" id="ENSMUST00000227269.2">
    <property type="protein sequence ID" value="ENSMUSP00000153947.2"/>
    <property type="gene ID" value="ENSMUSG00000040822.8"/>
</dbReference>
<dbReference type="GeneID" id="58248"/>
<dbReference type="KEGG" id="mmu:58248"/>
<dbReference type="UCSC" id="uc007twy.2">
    <property type="organism name" value="mouse"/>
</dbReference>
<dbReference type="AGR" id="MGI:1920893"/>
<dbReference type="MGI" id="MGI:1920893">
    <property type="gene designation" value="1700123O20Rik"/>
</dbReference>
<dbReference type="VEuPathDB" id="HostDB:ENSMUSG00000040822"/>
<dbReference type="eggNOG" id="ENOG502S13Y">
    <property type="taxonomic scope" value="Eukaryota"/>
</dbReference>
<dbReference type="GeneTree" id="ENSGT00390000007438"/>
<dbReference type="HOGENOM" id="CLU_121983_1_0_1"/>
<dbReference type="InParanoid" id="Q9JJ93"/>
<dbReference type="OMA" id="WFNYVSQ"/>
<dbReference type="OrthoDB" id="6514241at2759"/>
<dbReference type="PhylomeDB" id="Q9JJ93"/>
<dbReference type="TreeFam" id="TF324452"/>
<dbReference type="BioGRID-ORCS" id="58248">
    <property type="hits" value="2 hits in 77 CRISPR screens"/>
</dbReference>
<dbReference type="PRO" id="PR:Q9JJ93"/>
<dbReference type="Proteomes" id="UP000000589">
    <property type="component" value="Chromosome 14"/>
</dbReference>
<dbReference type="RNAct" id="Q9JJ93">
    <property type="molecule type" value="protein"/>
</dbReference>
<dbReference type="Bgee" id="ENSMUSG00000040822">
    <property type="expression patterns" value="Expressed in olfactory epithelium and 255 other cell types or tissues"/>
</dbReference>
<dbReference type="ExpressionAtlas" id="Q9JJ93">
    <property type="expression patterns" value="baseline and differential"/>
</dbReference>
<dbReference type="GO" id="GO:0005829">
    <property type="term" value="C:cytosol"/>
    <property type="evidence" value="ECO:0007669"/>
    <property type="project" value="Ensembl"/>
</dbReference>
<dbReference type="GO" id="GO:0005739">
    <property type="term" value="C:mitochondrion"/>
    <property type="evidence" value="ECO:0007669"/>
    <property type="project" value="UniProtKB-SubCell"/>
</dbReference>
<dbReference type="InterPro" id="IPR028019">
    <property type="entry name" value="DUF4508"/>
</dbReference>
<dbReference type="PANTHER" id="PTHR16260:SF3">
    <property type="entry name" value="CHROMOSOME 14 OPEN READING FRAME 119-LIKE-RELATED"/>
    <property type="match status" value="1"/>
</dbReference>
<dbReference type="PANTHER" id="PTHR16260">
    <property type="entry name" value="SIMILAR TO 1700123O20RIK PROTEIN"/>
    <property type="match status" value="1"/>
</dbReference>
<dbReference type="Pfam" id="PF14969">
    <property type="entry name" value="DUF4508"/>
    <property type="match status" value="1"/>
</dbReference>
<name>CN119_MOUSE</name>
<comment type="subcellular location">
    <subcellularLocation>
        <location evidence="1">Mitochondrion</location>
    </subcellularLocation>
</comment>
<organism>
    <name type="scientific">Mus musculus</name>
    <name type="common">Mouse</name>
    <dbReference type="NCBI Taxonomy" id="10090"/>
    <lineage>
        <taxon>Eukaryota</taxon>
        <taxon>Metazoa</taxon>
        <taxon>Chordata</taxon>
        <taxon>Craniata</taxon>
        <taxon>Vertebrata</taxon>
        <taxon>Euteleostomi</taxon>
        <taxon>Mammalia</taxon>
        <taxon>Eutheria</taxon>
        <taxon>Euarchontoglires</taxon>
        <taxon>Glires</taxon>
        <taxon>Rodentia</taxon>
        <taxon>Myomorpha</taxon>
        <taxon>Muroidea</taxon>
        <taxon>Muridae</taxon>
        <taxon>Murinae</taxon>
        <taxon>Mus</taxon>
        <taxon>Mus</taxon>
    </lineage>
</organism>